<feature type="chain" id="PRO_0000213691" description="Zinc transporter SLC39A7">
    <location>
        <begin position="1"/>
        <end position="469"/>
    </location>
</feature>
<feature type="transmembrane region" description="Helical" evidence="3">
    <location>
        <begin position="10"/>
        <end position="30"/>
    </location>
</feature>
<feature type="transmembrane region" description="Helical" evidence="3">
    <location>
        <begin position="138"/>
        <end position="158"/>
    </location>
</feature>
<feature type="transmembrane region" description="Helical" evidence="3">
    <location>
        <begin position="169"/>
        <end position="189"/>
    </location>
</feature>
<feature type="transmembrane region" description="Helical" evidence="3">
    <location>
        <begin position="214"/>
        <end position="234"/>
    </location>
</feature>
<feature type="transmembrane region" description="Helical" evidence="3">
    <location>
        <begin position="386"/>
        <end position="406"/>
    </location>
</feature>
<feature type="transmembrane region" description="Helical" evidence="3">
    <location>
        <begin position="410"/>
        <end position="430"/>
    </location>
</feature>
<feature type="transmembrane region" description="Helical" evidence="3">
    <location>
        <begin position="448"/>
        <end position="468"/>
    </location>
</feature>
<feature type="region of interest" description="Disordered" evidence="4">
    <location>
        <begin position="42"/>
        <end position="121"/>
    </location>
</feature>
<feature type="region of interest" description="Disordered" evidence="4">
    <location>
        <begin position="242"/>
        <end position="310"/>
    </location>
</feature>
<feature type="compositionally biased region" description="Basic and acidic residues" evidence="4">
    <location>
        <begin position="42"/>
        <end position="56"/>
    </location>
</feature>
<feature type="compositionally biased region" description="Basic and acidic residues" evidence="4">
    <location>
        <begin position="66"/>
        <end position="114"/>
    </location>
</feature>
<feature type="compositionally biased region" description="Basic residues" evidence="4">
    <location>
        <begin position="242"/>
        <end position="263"/>
    </location>
</feature>
<feature type="compositionally biased region" description="Basic and acidic residues" evidence="4">
    <location>
        <begin position="264"/>
        <end position="285"/>
    </location>
</feature>
<feature type="modified residue" description="Pros-methylhistidine" evidence="1">
    <location>
        <position position="66"/>
    </location>
</feature>
<feature type="modified residue" description="Phosphoserine" evidence="2">
    <location>
        <position position="275"/>
    </location>
</feature>
<feature type="modified residue" description="Phosphoserine" evidence="2">
    <location>
        <position position="276"/>
    </location>
</feature>
<evidence type="ECO:0000250" key="1">
    <source>
        <dbReference type="UniProtKB" id="Q31125"/>
    </source>
</evidence>
<evidence type="ECO:0000250" key="2">
    <source>
        <dbReference type="UniProtKB" id="Q92504"/>
    </source>
</evidence>
<evidence type="ECO:0000255" key="3"/>
<evidence type="ECO:0000256" key="4">
    <source>
        <dbReference type="SAM" id="MobiDB-lite"/>
    </source>
</evidence>
<evidence type="ECO:0000312" key="5">
    <source>
        <dbReference type="EMBL" id="CAH89522.1"/>
    </source>
</evidence>
<accession>Q5RFD5</accession>
<reference evidence="5" key="1">
    <citation type="submission" date="2004-11" db="EMBL/GenBank/DDBJ databases">
        <authorList>
            <consortium name="The German cDNA consortium"/>
        </authorList>
    </citation>
    <scope>NUCLEOTIDE SEQUENCE [LARGE SCALE MRNA]</scope>
    <source>
        <tissue evidence="5">Kidney</tissue>
    </source>
</reference>
<gene>
    <name evidence="2" type="primary">SLC39A7</name>
</gene>
<dbReference type="EMBL" id="CR857223">
    <property type="protein sequence ID" value="CAH89522.1"/>
    <property type="molecule type" value="mRNA"/>
</dbReference>
<dbReference type="RefSeq" id="NP_001127161.1">
    <property type="nucleotide sequence ID" value="NM_001133689.2"/>
</dbReference>
<dbReference type="SMR" id="Q5RFD5"/>
<dbReference type="FunCoup" id="Q5RFD5">
    <property type="interactions" value="1472"/>
</dbReference>
<dbReference type="STRING" id="9601.ENSPPYP00000019325"/>
<dbReference type="GeneID" id="100174212"/>
<dbReference type="KEGG" id="pon:100174212"/>
<dbReference type="CTD" id="7922"/>
<dbReference type="eggNOG" id="KOG2693">
    <property type="taxonomic scope" value="Eukaryota"/>
</dbReference>
<dbReference type="InParanoid" id="Q5RFD5"/>
<dbReference type="OrthoDB" id="200954at2759"/>
<dbReference type="Proteomes" id="UP000001595">
    <property type="component" value="Unplaced"/>
</dbReference>
<dbReference type="GO" id="GO:0005789">
    <property type="term" value="C:endoplasmic reticulum membrane"/>
    <property type="evidence" value="ECO:0007669"/>
    <property type="project" value="UniProtKB-SubCell"/>
</dbReference>
<dbReference type="GO" id="GO:0005794">
    <property type="term" value="C:Golgi apparatus"/>
    <property type="evidence" value="ECO:0007669"/>
    <property type="project" value="UniProtKB-SubCell"/>
</dbReference>
<dbReference type="GO" id="GO:0005385">
    <property type="term" value="F:zinc ion transmembrane transporter activity"/>
    <property type="evidence" value="ECO:0000250"/>
    <property type="project" value="UniProtKB"/>
</dbReference>
<dbReference type="GO" id="GO:0030183">
    <property type="term" value="P:B cell differentiation"/>
    <property type="evidence" value="ECO:0000250"/>
    <property type="project" value="UniProtKB"/>
</dbReference>
<dbReference type="GO" id="GO:0006882">
    <property type="term" value="P:intracellular zinc ion homeostasis"/>
    <property type="evidence" value="ECO:0000250"/>
    <property type="project" value="UniProtKB"/>
</dbReference>
<dbReference type="GO" id="GO:0110075">
    <property type="term" value="P:regulation of ferroptosis"/>
    <property type="evidence" value="ECO:0000250"/>
    <property type="project" value="UniProtKB"/>
</dbReference>
<dbReference type="GO" id="GO:0098773">
    <property type="term" value="P:skin epidermis development"/>
    <property type="evidence" value="ECO:0000250"/>
    <property type="project" value="UniProtKB"/>
</dbReference>
<dbReference type="InterPro" id="IPR003689">
    <property type="entry name" value="ZIP"/>
</dbReference>
<dbReference type="PANTHER" id="PTHR16950:SF25">
    <property type="entry name" value="ZINC TRANSPORTER SLC39A7"/>
    <property type="match status" value="1"/>
</dbReference>
<dbReference type="PANTHER" id="PTHR16950">
    <property type="entry name" value="ZINC TRANSPORTER SLC39A7 HISTIDINE-RICH MEMBRANE PROTEIN KE4"/>
    <property type="match status" value="1"/>
</dbReference>
<dbReference type="Pfam" id="PF02535">
    <property type="entry name" value="Zip"/>
    <property type="match status" value="1"/>
</dbReference>
<keyword id="KW-0256">Endoplasmic reticulum</keyword>
<keyword id="KW-0333">Golgi apparatus</keyword>
<keyword id="KW-0406">Ion transport</keyword>
<keyword id="KW-0472">Membrane</keyword>
<keyword id="KW-0488">Methylation</keyword>
<keyword id="KW-0597">Phosphoprotein</keyword>
<keyword id="KW-1185">Reference proteome</keyword>
<keyword id="KW-0812">Transmembrane</keyword>
<keyword id="KW-1133">Transmembrane helix</keyword>
<keyword id="KW-0813">Transport</keyword>
<keyword id="KW-0862">Zinc</keyword>
<keyword id="KW-0864">Zinc transport</keyword>
<name>S39A7_PONAB</name>
<protein>
    <recommendedName>
        <fullName>Zinc transporter SLC39A7</fullName>
    </recommendedName>
    <alternativeName>
        <fullName>Histidine-rich membrane protein Ke4</fullName>
    </alternativeName>
    <alternativeName>
        <fullName>Solute carrier family 39 member 7</fullName>
    </alternativeName>
    <alternativeName>
        <fullName>Zrt-, Irt-like protein 7</fullName>
        <shortName>ZIP7</shortName>
    </alternativeName>
</protein>
<sequence length="469" mass="49944">MARGLGAPHWVAVGLLTWATLGLLVAELGGHDDLHDDLQEDFHGHSHRHSHEDFHHGHSHAHGHGHTHESIWHGHTHGHDHGHSHGDLHHGHSHGHSHESLYHRGHGHDNEHSRGGYGESGAPGIKQDLDAVTLWAYALGATVLISAAPFFVLFLIPVESNSPRHRSLLQILLSFASGGLLGDAFLHLIPHALEPHSHHTLEQPGHGHSHSGQGPILSVGLWVLSGIVAFLVVEKFVRHVKGGHGHSHGHGHAHSHTHGSHGHGRQECSTKEKQSSEEEEKETRGVQKRRGGSTVPKDGPVRPQNAEEEKRGLDLRVSGYLNLAADLAHNFTDGLAIGASFRGGRGLGILTTMTVLLHEVPHEVGDFAILVQSGCSKKQAMRLQLLTAVGALAGTACALLTEGGAVGSEIAGGAGPGWVLPFTAGGFIYVATVSVLPELLREASPLQSLLEVLGLLGGVVMMVLIAHLE</sequence>
<proteinExistence type="evidence at transcript level"/>
<organism>
    <name type="scientific">Pongo abelii</name>
    <name type="common">Sumatran orangutan</name>
    <name type="synonym">Pongo pygmaeus abelii</name>
    <dbReference type="NCBI Taxonomy" id="9601"/>
    <lineage>
        <taxon>Eukaryota</taxon>
        <taxon>Metazoa</taxon>
        <taxon>Chordata</taxon>
        <taxon>Craniata</taxon>
        <taxon>Vertebrata</taxon>
        <taxon>Euteleostomi</taxon>
        <taxon>Mammalia</taxon>
        <taxon>Eutheria</taxon>
        <taxon>Euarchontoglires</taxon>
        <taxon>Primates</taxon>
        <taxon>Haplorrhini</taxon>
        <taxon>Catarrhini</taxon>
        <taxon>Hominidae</taxon>
        <taxon>Pongo</taxon>
    </lineage>
</organism>
<comment type="function">
    <text evidence="1 2">Transports Zn(2+) from the endoplasmic reticulum (ER)/Golgi apparatus to the cytosol, playing an essential role in the regulation of cytosolic zinc levels. Acts as a gatekeeper of zinc release from intracellular stores, requiring post-translational activation by phosphorylation, resulting in activation of multiple downstream pathways leading to cell growth and proliferation. Has an essential role in B cell development and is required for proper B cell receptor signaling (By similarity). Plays an important role in maintaining intestinal epithelial homeostasis and skin dermis development by regulating ER function. Controls cell signaling pathways involved in glucose metabolism in skeletal muscle (By similarity). Has a protective role against ER stress in different biological contexts. Mediates Zn(2+)-induced ferroptosis (By similarity).</text>
</comment>
<comment type="catalytic activity">
    <reaction evidence="2">
        <text>Zn(2+)(in) = Zn(2+)(out)</text>
        <dbReference type="Rhea" id="RHEA:29351"/>
        <dbReference type="ChEBI" id="CHEBI:29105"/>
    </reaction>
</comment>
<comment type="subunit">
    <text evidence="2">Homodimer.</text>
</comment>
<comment type="subcellular location">
    <subcellularLocation>
        <location evidence="2">Endoplasmic reticulum membrane</location>
        <topology evidence="3">Multi-pass membrane protein</topology>
    </subcellularLocation>
    <subcellularLocation>
        <location evidence="2">Golgi apparatus</location>
        <location evidence="2">cis-Golgi network membrane</location>
        <topology evidence="3">Multi-pass membrane protein</topology>
    </subcellularLocation>
</comment>
<comment type="PTM">
    <text evidence="2">Methylation at some His residue by METTL9 leads to reduced zinc-binding.</text>
</comment>
<comment type="PTM">
    <text evidence="2">Rapidly phosphorylated by CK2 following Zn(2+) treatment. This phosphorylation is required for efficient cytosolic Zn(2+) release.</text>
</comment>
<comment type="similarity">
    <text evidence="3">Belongs to the ZIP transporter (TC 2.A.5) family. KE4/Catsup subfamily.</text>
</comment>